<sequence>MPHTGSQHTLQATPKTAQHTGAQKAPEQAIALKKEQQLKNQEGATSHRKAHTEGCHTQKTRMSADKAGLRHRQGSGEVRARTASTRVEGECSSDGVVMMFCMPARGEEEKASGEARGEDVGSSRESRQGTAHKSTCMHTEAASLQKAGEIGKVEDAKT</sequence>
<evidence type="ECO:0000256" key="1">
    <source>
        <dbReference type="SAM" id="MobiDB-lite"/>
    </source>
</evidence>
<organism>
    <name type="scientific">Encephalitozoon cuniculi (strain GB-M1)</name>
    <name type="common">Microsporidian parasite</name>
    <dbReference type="NCBI Taxonomy" id="284813"/>
    <lineage>
        <taxon>Eukaryota</taxon>
        <taxon>Fungi</taxon>
        <taxon>Fungi incertae sedis</taxon>
        <taxon>Microsporidia</taxon>
        <taxon>Unikaryonidae</taxon>
        <taxon>Encephalitozoon</taxon>
    </lineage>
</organism>
<feature type="chain" id="PRO_0000223079" description="Uncharacterized protein ECU01_0010/ECU01_1600/ECU04_0010">
    <location>
        <begin position="1"/>
        <end position="158"/>
    </location>
</feature>
<feature type="region of interest" description="Disordered" evidence="1">
    <location>
        <begin position="1"/>
        <end position="89"/>
    </location>
</feature>
<feature type="region of interest" description="Disordered" evidence="1">
    <location>
        <begin position="107"/>
        <end position="158"/>
    </location>
</feature>
<feature type="compositionally biased region" description="Polar residues" evidence="1">
    <location>
        <begin position="1"/>
        <end position="21"/>
    </location>
</feature>
<feature type="compositionally biased region" description="Basic and acidic residues" evidence="1">
    <location>
        <begin position="51"/>
        <end position="68"/>
    </location>
</feature>
<feature type="compositionally biased region" description="Basic and acidic residues" evidence="1">
    <location>
        <begin position="107"/>
        <end position="127"/>
    </location>
</feature>
<feature type="compositionally biased region" description="Polar residues" evidence="1">
    <location>
        <begin position="128"/>
        <end position="137"/>
    </location>
</feature>
<feature type="compositionally biased region" description="Basic and acidic residues" evidence="1">
    <location>
        <begin position="149"/>
        <end position="158"/>
    </location>
</feature>
<reference key="1">
    <citation type="journal article" date="2001" name="Genome Res.">
        <title>Sequence and analysis of chromosome I of the amitochondriate intracellular parasite Encephalitozoon cuniculi (Microspora).</title>
        <authorList>
            <person name="Peyret P."/>
            <person name="Katinka M.D."/>
            <person name="Duprat S."/>
            <person name="Duffieux F."/>
            <person name="Barbe V."/>
            <person name="Barbazanges M."/>
            <person name="Weissenbach J."/>
            <person name="Saurin W."/>
            <person name="Vivares C.P."/>
        </authorList>
    </citation>
    <scope>NUCLEOTIDE SEQUENCE [LARGE SCALE GENOMIC DNA]</scope>
    <source>
        <strain>GB-M1</strain>
    </source>
</reference>
<reference key="2">
    <citation type="journal article" date="2001" name="Nature">
        <title>Genome sequence and gene compaction of the eukaryote parasite Encephalitozoon cuniculi.</title>
        <authorList>
            <person name="Katinka M.D."/>
            <person name="Duprat S."/>
            <person name="Cornillot E."/>
            <person name="Metenier G."/>
            <person name="Thomarat F."/>
            <person name="Prensier G."/>
            <person name="Barbe V."/>
            <person name="Peyretaillade E."/>
            <person name="Brottier P."/>
            <person name="Wincker P."/>
            <person name="Delbac F."/>
            <person name="El Alaoui H."/>
            <person name="Peyret P."/>
            <person name="Saurin W."/>
            <person name="Gouy M."/>
            <person name="Weissenbach J."/>
            <person name="Vivares C.P."/>
        </authorList>
    </citation>
    <scope>NUCLEOTIDE SEQUENCE [LARGE SCALE GENOMIC DNA]</scope>
    <source>
        <strain>GB-M1</strain>
    </source>
</reference>
<proteinExistence type="predicted"/>
<protein>
    <recommendedName>
        <fullName>Uncharacterized protein ECU01_0010/ECU01_1600/ECU04_0010</fullName>
    </recommendedName>
</protein>
<accession>Q8ST80</accession>
<name>Y101_ENCCU</name>
<keyword id="KW-1185">Reference proteome</keyword>
<gene>
    <name type="ordered locus">ECU01_0010</name>
</gene>
<gene>
    <name type="ordered locus">ECU01_1600</name>
</gene>
<gene>
    <name type="ordered locus">ECU04_0010</name>
</gene>
<dbReference type="EMBL" id="AL391737">
    <property type="protein sequence ID" value="CAD24873.1"/>
    <property type="molecule type" value="Genomic_DNA"/>
</dbReference>
<dbReference type="EMBL" id="AL391737">
    <property type="protein sequence ID" value="CAD25031.1"/>
    <property type="molecule type" value="Genomic_DNA"/>
</dbReference>
<dbReference type="EMBL" id="AL590444">
    <property type="protein sequence ID" value="CAD25189.1"/>
    <property type="molecule type" value="Genomic_DNA"/>
</dbReference>
<dbReference type="RefSeq" id="NP_001402090.1">
    <property type="nucleotide sequence ID" value="NM_001415161.1"/>
</dbReference>
<dbReference type="RefSeq" id="NP_584685.1">
    <property type="nucleotide sequence ID" value="NM_001041035.1"/>
</dbReference>
<dbReference type="RefSeq" id="XP_965838.1">
    <property type="nucleotide sequence ID" value="XM_960745.1"/>
</dbReference>
<dbReference type="RefSeq" id="XP_965996.1">
    <property type="nucleotide sequence ID" value="XM_960903.1"/>
</dbReference>
<dbReference type="SMR" id="Q8ST80"/>
<dbReference type="GeneID" id="858833"/>
<dbReference type="GeneID" id="860172"/>
<dbReference type="KEGG" id="ecu:ECU04_0010"/>
<dbReference type="VEuPathDB" id="MicrosporidiaDB:ECU01_0010"/>
<dbReference type="VEuPathDB" id="MicrosporidiaDB:ECU01_1600"/>
<dbReference type="VEuPathDB" id="MicrosporidiaDB:ECU04_0010"/>
<dbReference type="HOGENOM" id="CLU_1669376_0_0_1"/>
<dbReference type="InParanoid" id="Q8ST80"/>
<dbReference type="Proteomes" id="UP000000819">
    <property type="component" value="Chromosome I"/>
</dbReference>
<dbReference type="Proteomes" id="UP000000819">
    <property type="component" value="Chromosome IV"/>
</dbReference>